<accession>Q92316</accession>
<accession>D6VVA8</accession>
<accession>P87030</accession>
<name>OST5_YEAST</name>
<reference key="1">
    <citation type="journal article" date="1997" name="EMBO J.">
        <title>A specific screen for oligosaccharyltransferase mutations identifies the 9 kDa OST5 protein required for optimal activity in vivo and in vitro.</title>
        <authorList>
            <person name="Reiss G."/>
            <person name="te Heesen S."/>
            <person name="Gilmore R."/>
            <person name="Zufferey R."/>
            <person name="Aebi M."/>
        </authorList>
    </citation>
    <scope>NUCLEOTIDE SEQUENCE [GENOMIC DNA]</scope>
    <scope>PROTEIN SEQUENCE OF 2-11</scope>
</reference>
<reference key="2">
    <citation type="journal article" date="1997" name="Nature">
        <title>The nucleotide sequence of Saccharomyces cerevisiae chromosome VII.</title>
        <authorList>
            <person name="Tettelin H."/>
            <person name="Agostoni-Carbone M.L."/>
            <person name="Albermann K."/>
            <person name="Albers M."/>
            <person name="Arroyo J."/>
            <person name="Backes U."/>
            <person name="Barreiros T."/>
            <person name="Bertani I."/>
            <person name="Bjourson A.J."/>
            <person name="Brueckner M."/>
            <person name="Bruschi C.V."/>
            <person name="Carignani G."/>
            <person name="Castagnoli L."/>
            <person name="Cerdan E."/>
            <person name="Clemente M.L."/>
            <person name="Coblenz A."/>
            <person name="Coglievina M."/>
            <person name="Coissac E."/>
            <person name="Defoor E."/>
            <person name="Del Bino S."/>
            <person name="Delius H."/>
            <person name="Delneri D."/>
            <person name="de Wergifosse P."/>
            <person name="Dujon B."/>
            <person name="Durand P."/>
            <person name="Entian K.-D."/>
            <person name="Eraso P."/>
            <person name="Escribano V."/>
            <person name="Fabiani L."/>
            <person name="Fartmann B."/>
            <person name="Feroli F."/>
            <person name="Feuermann M."/>
            <person name="Frontali L."/>
            <person name="Garcia-Gonzalez M."/>
            <person name="Garcia-Saez M.I."/>
            <person name="Goffeau A."/>
            <person name="Guerreiro P."/>
            <person name="Hani J."/>
            <person name="Hansen M."/>
            <person name="Hebling U."/>
            <person name="Hernandez K."/>
            <person name="Heumann K."/>
            <person name="Hilger F."/>
            <person name="Hofmann B."/>
            <person name="Indge K.J."/>
            <person name="James C.M."/>
            <person name="Klima R."/>
            <person name="Koetter P."/>
            <person name="Kramer B."/>
            <person name="Kramer W."/>
            <person name="Lauquin G."/>
            <person name="Leuther H."/>
            <person name="Louis E.J."/>
            <person name="Maillier E."/>
            <person name="Marconi A."/>
            <person name="Martegani E."/>
            <person name="Mazon M.J."/>
            <person name="Mazzoni C."/>
            <person name="McReynolds A.D.K."/>
            <person name="Melchioretto P."/>
            <person name="Mewes H.-W."/>
            <person name="Minenkova O."/>
            <person name="Mueller-Auer S."/>
            <person name="Nawrocki A."/>
            <person name="Netter P."/>
            <person name="Neu R."/>
            <person name="Nombela C."/>
            <person name="Oliver S.G."/>
            <person name="Panzeri L."/>
            <person name="Paoluzi S."/>
            <person name="Plevani P."/>
            <person name="Portetelle D."/>
            <person name="Portillo F."/>
            <person name="Potier S."/>
            <person name="Purnelle B."/>
            <person name="Rieger M."/>
            <person name="Riles L."/>
            <person name="Rinaldi T."/>
            <person name="Robben J."/>
            <person name="Rodrigues-Pousada C."/>
            <person name="Rodriguez-Belmonte E."/>
            <person name="Rodriguez-Torres A.M."/>
            <person name="Rose M."/>
            <person name="Ruzzi M."/>
            <person name="Saliola M."/>
            <person name="Sanchez-Perez M."/>
            <person name="Schaefer B."/>
            <person name="Schaefer M."/>
            <person name="Scharfe M."/>
            <person name="Schmidheini T."/>
            <person name="Schreer A."/>
            <person name="Skala J."/>
            <person name="Souciet J.-L."/>
            <person name="Steensma H.Y."/>
            <person name="Talla E."/>
            <person name="Thierry A."/>
            <person name="Vandenbol M."/>
            <person name="van der Aart Q.J.M."/>
            <person name="Van Dyck L."/>
            <person name="Vanoni M."/>
            <person name="Verhasselt P."/>
            <person name="Voet M."/>
            <person name="Volckaert G."/>
            <person name="Wambutt R."/>
            <person name="Watson M.D."/>
            <person name="Weber N."/>
            <person name="Wedler E."/>
            <person name="Wedler H."/>
            <person name="Wipfli P."/>
            <person name="Wolf K."/>
            <person name="Wright L.F."/>
            <person name="Zaccaria P."/>
            <person name="Zimmermann M."/>
            <person name="Zollner A."/>
            <person name="Kleine K."/>
        </authorList>
    </citation>
    <scope>NUCLEOTIDE SEQUENCE [LARGE SCALE GENOMIC DNA]</scope>
    <source>
        <strain>ATCC 204508 / S288c</strain>
    </source>
</reference>
<reference key="3">
    <citation type="journal article" date="2014" name="G3 (Bethesda)">
        <title>The reference genome sequence of Saccharomyces cerevisiae: Then and now.</title>
        <authorList>
            <person name="Engel S.R."/>
            <person name="Dietrich F.S."/>
            <person name="Fisk D.G."/>
            <person name="Binkley G."/>
            <person name="Balakrishnan R."/>
            <person name="Costanzo M.C."/>
            <person name="Dwight S.S."/>
            <person name="Hitz B.C."/>
            <person name="Karra K."/>
            <person name="Nash R.S."/>
            <person name="Weng S."/>
            <person name="Wong E.D."/>
            <person name="Lloyd P."/>
            <person name="Skrzypek M.S."/>
            <person name="Miyasato S.R."/>
            <person name="Simison M."/>
            <person name="Cherry J.M."/>
        </authorList>
    </citation>
    <scope>GENOME REANNOTATION</scope>
    <source>
        <strain>ATCC 204508 / S288c</strain>
    </source>
</reference>
<reference key="4">
    <citation type="journal article" date="1994" name="J. Biol. Chem.">
        <title>The Saccharomyces cerevisiae oligosaccharyltransferase is a protein complex composed of Wbp1p, Swp1p, and four additional polypeptides.</title>
        <authorList>
            <person name="Kelleher D.J."/>
            <person name="Gilmore R."/>
        </authorList>
    </citation>
    <scope>IDENTIFICATION IN THE OLIGOSACCHARYL TRANSFERASE COMPLEX</scope>
</reference>
<reference key="5">
    <citation type="journal article" date="1997" name="J. Biol. Chem.">
        <title>The highly conserved Stt3 protein is a subunit of the yeast oligosaccharyltransferase and forms a subcomplex with Ost3p and Ost4p.</title>
        <authorList>
            <person name="Karaoglu D."/>
            <person name="Kelleher D.J."/>
            <person name="Gilmore R."/>
        </authorList>
    </citation>
    <scope>IDENTIFICATION IN THE OLIGOSACCHARYL TRANSFERASE COMPLEX</scope>
</reference>
<reference key="6">
    <citation type="journal article" date="1999" name="Biochim. Biophys. Acta">
        <title>The oligosaccharyltransferase complex from yeast.</title>
        <authorList>
            <person name="Knauer R."/>
            <person name="Lehle L."/>
        </authorList>
    </citation>
    <scope>REVIEW ON OLIGOSACCHARYL TRANSFERASE</scope>
</reference>
<reference key="7">
    <citation type="journal article" date="2001" name="Biochemistry">
        <title>Allosteric regulation provides a molecular mechanism for preferential utilization of the fully assembled dolichol-linked oligosaccharide by the yeast oligosaccharyltransferase.</title>
        <authorList>
            <person name="Karaoglu D."/>
            <person name="Kelleher D.J."/>
            <person name="Gilmore R."/>
        </authorList>
    </citation>
    <scope>FUNCTION</scope>
</reference>
<reference key="8">
    <citation type="journal article" date="2003" name="Nature">
        <title>Global analysis of protein localization in budding yeast.</title>
        <authorList>
            <person name="Huh W.-K."/>
            <person name="Falvo J.V."/>
            <person name="Gerke L.C."/>
            <person name="Carroll A.S."/>
            <person name="Howson R.W."/>
            <person name="Weissman J.S."/>
            <person name="O'Shea E.K."/>
        </authorList>
    </citation>
    <scope>SUBCELLULAR LOCATION [LARGE SCALE ANALYSIS]</scope>
</reference>
<reference key="9">
    <citation type="journal article" date="2003" name="Nature">
        <title>Global analysis of protein expression in yeast.</title>
        <authorList>
            <person name="Ghaemmaghami S."/>
            <person name="Huh W.-K."/>
            <person name="Bower K."/>
            <person name="Howson R.W."/>
            <person name="Belle A."/>
            <person name="Dephoure N."/>
            <person name="O'Shea E.K."/>
            <person name="Weissman J.S."/>
        </authorList>
    </citation>
    <scope>LEVEL OF PROTEIN EXPRESSION [LARGE SCALE ANALYSIS]</scope>
</reference>
<reference key="10">
    <citation type="journal article" date="2005" name="FEBS Lett.">
        <title>Yeast oligosaccharyltransferase consists of two functionally distinct sub-complexes, specified by either the Ost3p or Ost6p subunit.</title>
        <authorList>
            <person name="Schwarz M."/>
            <person name="Knauer R."/>
            <person name="Lehle L."/>
        </authorList>
    </citation>
    <scope>COMPOSITION OF OLIGOSACCHARYL TRANSFERASE COMPLEXES</scope>
</reference>
<reference key="11">
    <citation type="journal article" date="2005" name="Glycobiology">
        <title>The 3.4-kDa Ost4 protein is required for the assembly of two distinct oligosaccharyltransferase complexes in yeast.</title>
        <authorList>
            <person name="Spirig U."/>
            <person name="Bodmer D."/>
            <person name="Wacker M."/>
            <person name="Burda P."/>
            <person name="Aebi M."/>
        </authorList>
    </citation>
    <scope>COMPOSITION OF OLIGOSACCHARYL TRANSFERASE COMPLEXES</scope>
</reference>
<reference key="12">
    <citation type="journal article" date="2005" name="Glycobiology">
        <title>Two oligosaccharyl transferase complexes exist in yeast and associate with two different translocons.</title>
        <authorList>
            <person name="Yan A."/>
            <person name="Lennarz W.J."/>
        </authorList>
    </citation>
    <scope>COMPOSITION OF OLIGOSACCHARYL TRANSFERASE COMPLEXES</scope>
</reference>
<reference key="13">
    <citation type="journal article" date="2005" name="Proc. Natl. Acad. Sci. U.S.A.">
        <title>Studies of yeast oligosaccharyl transferase subunits using the split-ubiquitin system: topological features and in vivo interactions.</title>
        <authorList>
            <person name="Yan A."/>
            <person name="Wu E."/>
            <person name="Lennarz W.J."/>
        </authorList>
    </citation>
    <scope>TOPOLOGY</scope>
    <scope>INTERACTION WITH OST1; OST2 AND OST4</scope>
</reference>
<reference key="14">
    <citation type="journal article" date="2018" name="Nature">
        <title>The atomic structure of a eukaryotic oligosaccharyltransferase complex.</title>
        <authorList>
            <person name="Bai L."/>
            <person name="Wang T."/>
            <person name="Zhao G."/>
            <person name="Kovach A."/>
            <person name="Li H."/>
        </authorList>
    </citation>
    <scope>STRUCTURE BY ELECTRON MICROSCOPY (3.50 ANGSTROMS)</scope>
</reference>
<reference key="15">
    <citation type="journal article" date="2018" name="Science">
        <title>Structure of the yeast oligosaccharyltransferase complex gives insight into eukaryotic N-glycosylation.</title>
        <authorList>
            <person name="Wild R."/>
            <person name="Kowal J."/>
            <person name="Eyring J."/>
            <person name="Ngwa E.M."/>
            <person name="Aebi M."/>
            <person name="Locher K.P."/>
        </authorList>
    </citation>
    <scope>STRUCTURE BY ELECTRON MICROSCOPY (3.30 ANGSTROMS)</scope>
</reference>
<gene>
    <name type="primary">OST5</name>
    <name type="ordered locus">YGL226C-A</name>
    <name type="ORF">YGL226BC</name>
</gene>
<keyword id="KW-0002">3D-structure</keyword>
<keyword id="KW-0903">Direct protein sequencing</keyword>
<keyword id="KW-0256">Endoplasmic reticulum</keyword>
<keyword id="KW-0472">Membrane</keyword>
<keyword id="KW-1185">Reference proteome</keyword>
<keyword id="KW-0812">Transmembrane</keyword>
<keyword id="KW-1133">Transmembrane helix</keyword>
<evidence type="ECO:0000269" key="1">
    <source>
    </source>
</evidence>
<evidence type="ECO:0000269" key="2">
    <source>
    </source>
</evidence>
<evidence type="ECO:0000269" key="3">
    <source>
    </source>
</evidence>
<evidence type="ECO:0000269" key="4">
    <source>
    </source>
</evidence>
<evidence type="ECO:0000269" key="5">
    <source>
    </source>
</evidence>
<evidence type="ECO:0000269" key="6">
    <source>
    </source>
</evidence>
<evidence type="ECO:0000269" key="7">
    <source>
    </source>
</evidence>
<evidence type="ECO:0000269" key="8">
    <source>
    </source>
</evidence>
<evidence type="ECO:0000269" key="9">
    <source>
    </source>
</evidence>
<evidence type="ECO:0000269" key="10">
    <source>
    </source>
</evidence>
<evidence type="ECO:0000305" key="11"/>
<evidence type="ECO:0000305" key="12">
    <source>
    </source>
</evidence>
<evidence type="ECO:0000305" key="13">
    <source>
    </source>
</evidence>
<evidence type="ECO:0007829" key="14">
    <source>
        <dbReference type="PDB" id="8AGE"/>
    </source>
</evidence>
<organism>
    <name type="scientific">Saccharomyces cerevisiae (strain ATCC 204508 / S288c)</name>
    <name type="common">Baker's yeast</name>
    <dbReference type="NCBI Taxonomy" id="559292"/>
    <lineage>
        <taxon>Eukaryota</taxon>
        <taxon>Fungi</taxon>
        <taxon>Dikarya</taxon>
        <taxon>Ascomycota</taxon>
        <taxon>Saccharomycotina</taxon>
        <taxon>Saccharomycetes</taxon>
        <taxon>Saccharomycetales</taxon>
        <taxon>Saccharomycetaceae</taxon>
        <taxon>Saccharomyces</taxon>
    </lineage>
</organism>
<dbReference type="EMBL" id="X97545">
    <property type="protein sequence ID" value="CAA66147.1"/>
    <property type="molecule type" value="Genomic_DNA"/>
</dbReference>
<dbReference type="EMBL" id="Z72749">
    <property type="protein sequence ID" value="CAA96944.1"/>
    <property type="molecule type" value="Genomic_DNA"/>
</dbReference>
<dbReference type="EMBL" id="BK006941">
    <property type="protein sequence ID" value="DAA07892.1"/>
    <property type="molecule type" value="Genomic_DNA"/>
</dbReference>
<dbReference type="PIR" id="S71576">
    <property type="entry name" value="S71576"/>
</dbReference>
<dbReference type="RefSeq" id="NP_011288.1">
    <property type="nucleotide sequence ID" value="NM_001181091.1"/>
</dbReference>
<dbReference type="PDB" id="6C26">
    <property type="method" value="EM"/>
    <property type="resolution" value="3.50 A"/>
    <property type="chains" value="5=1-86"/>
</dbReference>
<dbReference type="PDB" id="6EZN">
    <property type="method" value="EM"/>
    <property type="resolution" value="3.30 A"/>
    <property type="chains" value="E=1-86"/>
</dbReference>
<dbReference type="PDB" id="7OCI">
    <property type="method" value="EM"/>
    <property type="resolution" value="3.46 A"/>
    <property type="chains" value="E=1-86"/>
</dbReference>
<dbReference type="PDB" id="8AGB">
    <property type="method" value="EM"/>
    <property type="resolution" value="3.00 A"/>
    <property type="chains" value="C=1-86"/>
</dbReference>
<dbReference type="PDB" id="8AGC">
    <property type="method" value="EM"/>
    <property type="resolution" value="3.10 A"/>
    <property type="chains" value="C=1-86"/>
</dbReference>
<dbReference type="PDB" id="8AGE">
    <property type="method" value="EM"/>
    <property type="resolution" value="2.80 A"/>
    <property type="chains" value="C=1-86"/>
</dbReference>
<dbReference type="PDBsum" id="6C26"/>
<dbReference type="PDBsum" id="6EZN"/>
<dbReference type="PDBsum" id="7OCI"/>
<dbReference type="PDBsum" id="8AGB"/>
<dbReference type="PDBsum" id="8AGC"/>
<dbReference type="PDBsum" id="8AGE"/>
<dbReference type="EMDB" id="EMD-12808"/>
<dbReference type="EMDB" id="EMD-15419"/>
<dbReference type="EMDB" id="EMD-15420"/>
<dbReference type="EMDB" id="EMD-15421"/>
<dbReference type="EMDB" id="EMD-4161"/>
<dbReference type="EMDB" id="EMD-7336"/>
<dbReference type="SMR" id="Q92316"/>
<dbReference type="BioGRID" id="33013">
    <property type="interactions" value="87"/>
</dbReference>
<dbReference type="ComplexPortal" id="CPX-1638">
    <property type="entry name" value="Oligosaccharyltransferase complex, OST6 variant"/>
</dbReference>
<dbReference type="ComplexPortal" id="CPX-1639">
    <property type="entry name" value="Oligosaccharyltransferase complex, OST3 variant"/>
</dbReference>
<dbReference type="DIP" id="DIP-2458N"/>
<dbReference type="FunCoup" id="Q92316">
    <property type="interactions" value="151"/>
</dbReference>
<dbReference type="IntAct" id="Q92316">
    <property type="interactions" value="6"/>
</dbReference>
<dbReference type="STRING" id="4932.YGL226C-A"/>
<dbReference type="TCDB" id="9.B.142.3.14">
    <property type="family name" value="the integral membrane glycosyltransferase family 39 (gt39) family"/>
</dbReference>
<dbReference type="iPTMnet" id="Q92316"/>
<dbReference type="PaxDb" id="4932-YGL226C-A"/>
<dbReference type="PeptideAtlas" id="Q92316"/>
<dbReference type="EnsemblFungi" id="YGL226C-A_mRNA">
    <property type="protein sequence ID" value="YGL226C-A"/>
    <property type="gene ID" value="YGL226C-A"/>
</dbReference>
<dbReference type="GeneID" id="852625"/>
<dbReference type="KEGG" id="sce:YGL226C-A"/>
<dbReference type="AGR" id="SGD:S000003194"/>
<dbReference type="SGD" id="S000003194">
    <property type="gene designation" value="OST5"/>
</dbReference>
<dbReference type="VEuPathDB" id="FungiDB:YGL226C-A"/>
<dbReference type="eggNOG" id="ENOG502S993">
    <property type="taxonomic scope" value="Eukaryota"/>
</dbReference>
<dbReference type="HOGENOM" id="CLU_183917_0_0_1"/>
<dbReference type="InParanoid" id="Q92316"/>
<dbReference type="OMA" id="CATINIM"/>
<dbReference type="OrthoDB" id="4047914at2759"/>
<dbReference type="BioCyc" id="MetaCyc:YGL226C-MONOMER"/>
<dbReference type="BioCyc" id="YEAST:YGL226C-MONOMER"/>
<dbReference type="BRENDA" id="2.4.99.18">
    <property type="organism ID" value="984"/>
</dbReference>
<dbReference type="UniPathway" id="UPA00378"/>
<dbReference type="BioGRID-ORCS" id="852625">
    <property type="hits" value="7 hits in 10 CRISPR screens"/>
</dbReference>
<dbReference type="PRO" id="PR:Q92316"/>
<dbReference type="Proteomes" id="UP000002311">
    <property type="component" value="Chromosome VII"/>
</dbReference>
<dbReference type="RNAct" id="Q92316">
    <property type="molecule type" value="protein"/>
</dbReference>
<dbReference type="GO" id="GO:0005789">
    <property type="term" value="C:endoplasmic reticulum membrane"/>
    <property type="evidence" value="ECO:0000303"/>
    <property type="project" value="ComplexPortal"/>
</dbReference>
<dbReference type="GO" id="GO:0008250">
    <property type="term" value="C:oligosaccharyltransferase complex"/>
    <property type="evidence" value="ECO:0000314"/>
    <property type="project" value="SGD"/>
</dbReference>
<dbReference type="GO" id="GO:0005198">
    <property type="term" value="F:structural molecule activity"/>
    <property type="evidence" value="ECO:0000314"/>
    <property type="project" value="SGD"/>
</dbReference>
<dbReference type="GO" id="GO:0006487">
    <property type="term" value="P:protein N-linked glycosylation"/>
    <property type="evidence" value="ECO:0000315"/>
    <property type="project" value="SGD"/>
</dbReference>
<dbReference type="InterPro" id="IPR007915">
    <property type="entry name" value="TMEM258/Ost5"/>
</dbReference>
<dbReference type="Pfam" id="PF05251">
    <property type="entry name" value="Ost5"/>
    <property type="match status" value="1"/>
</dbReference>
<protein>
    <recommendedName>
        <fullName>Dolichyl-diphosphooligosaccharide--protein glycosyltransferase subunit OST5</fullName>
        <shortName>Oligosaccharyl transferase subunit OST5</shortName>
    </recommendedName>
    <alternativeName>
        <fullName>Oligosaccharyl transferase 9.5 kDa subunit</fullName>
    </alternativeName>
    <alternativeName>
        <fullName>Oligosaccharyl transferase subunit zeta</fullName>
    </alternativeName>
</protein>
<sequence>MTYEQLYKEFHSSKSFQPFIHLDTQPKFAICGLIVTLAVLSSALFAVGSKSSYIKKLFFYTILSVIGSLFAGLTTVFASNSFGVYV</sequence>
<feature type="initiator methionine" description="Removed" evidence="9">
    <location>
        <position position="1"/>
    </location>
</feature>
<feature type="chain" id="PRO_0000058099" description="Dolichyl-diphosphooligosaccharide--protein glycosyltransferase subunit OST5">
    <location>
        <begin position="2"/>
        <end position="86"/>
    </location>
</feature>
<feature type="topological domain" description="Lumenal" evidence="7">
    <location>
        <begin position="2"/>
        <end position="27"/>
    </location>
</feature>
<feature type="transmembrane region" description="Helical" evidence="7">
    <location>
        <begin position="28"/>
        <end position="48"/>
    </location>
</feature>
<feature type="topological domain" description="Cytoplasmic" evidence="12">
    <location>
        <begin position="49"/>
        <end position="56"/>
    </location>
</feature>
<feature type="transmembrane region" description="Helical" evidence="7">
    <location>
        <begin position="57"/>
        <end position="77"/>
    </location>
</feature>
<feature type="topological domain" description="Lumenal" evidence="7">
    <location>
        <begin position="78"/>
        <end position="86"/>
    </location>
</feature>
<feature type="sequence conflict" description="In Ref. 1; CAA66147." evidence="11" ref="1">
    <original>A</original>
    <variation>T</variation>
    <location>
        <position position="46"/>
    </location>
</feature>
<feature type="helix" evidence="14">
    <location>
        <begin position="3"/>
        <end position="10"/>
    </location>
</feature>
<feature type="strand" evidence="14">
    <location>
        <begin position="13"/>
        <end position="15"/>
    </location>
</feature>
<feature type="turn" evidence="14">
    <location>
        <begin position="22"/>
        <end position="24"/>
    </location>
</feature>
<feature type="helix" evidence="14">
    <location>
        <begin position="25"/>
        <end position="48"/>
    </location>
</feature>
<feature type="helix" evidence="14">
    <location>
        <begin position="53"/>
        <end position="82"/>
    </location>
</feature>
<comment type="function">
    <text evidence="1">Subunit of the oligosaccharyl transferase (OST) complex that catalyzes the initial transfer of a defined glycan (Glc(3)Man(9)GlcNAc(2) in eukaryotes) from the lipid carrier dolichol-pyrophosphate to an asparagine residue within an Asn-X-Ser/Thr consensus motif in nascent polypeptide chains, the first step in protein N-glycosylation. N-glycosylation occurs cotranslationally and the complex associates with the Sec61 complex at the channel-forming translocon complex that mediates protein translocation across the endoplasmic reticulum (ER). All subunits are required for a maximal enzyme activity.</text>
</comment>
<comment type="pathway">
    <text evidence="13">Protein modification; protein glycosylation.</text>
</comment>
<comment type="subunit">
    <text evidence="4 5 6 7 8 10">Component of the oligosaccharyltransferase (OST) complex, which appears to exist in two assemblies comprising OST1, OST2, OST4, OST5, STT3, SWP1, WPB1, and either OST3 or OST6 (PubMed:15886282, PubMed:16096345, PubMed:16297388, PubMed:29301962, PubMed:8175708, PubMed:9405463). OST assembly occurs through the formation of 3 subcomplexes. Subcomplex 1 contains OST1 and OST5, subcomplex 2 contains STT3, OST3, and OST4, and subcomplex 3 contains OST2, WBP1, and SWP1 (PubMed:29301962).</text>
</comment>
<comment type="subcellular location">
    <subcellularLocation>
        <location evidence="2">Endoplasmic reticulum membrane</location>
        <topology evidence="7">Multi-pass membrane protein</topology>
    </subcellularLocation>
</comment>
<comment type="miscellaneous">
    <text evidence="3">Present with 1010 molecules/cell in log phase SD medium.</text>
</comment>
<comment type="similarity">
    <text evidence="11">Belongs to the OST5 family.</text>
</comment>
<proteinExistence type="evidence at protein level"/>